<protein>
    <recommendedName>
        <fullName evidence="1">Small ribosomal subunit protein uS11</fullName>
    </recommendedName>
    <alternativeName>
        <fullName evidence="2">30S ribosomal protein S11</fullName>
    </alternativeName>
</protein>
<proteinExistence type="inferred from homology"/>
<comment type="function">
    <text evidence="1">Located on the platform of the 30S subunit, it bridges several disparate RNA helices of the 16S rRNA. Forms part of the Shine-Dalgarno cleft in the 70S ribosome.</text>
</comment>
<comment type="subunit">
    <text evidence="1">Part of the 30S ribosomal subunit. Interacts with proteins S7 and S18. Binds to IF-3.</text>
</comment>
<comment type="similarity">
    <text evidence="1">Belongs to the universal ribosomal protein uS11 family.</text>
</comment>
<sequence>MAKRVKRAGRKREKKHVERGIAHIHSTFNNTIVTITDPAGNTISWASAGTIGFKGSRKSTPFAAQMAAESAAKSAMEHGMKTVDVYVKGPGAGREAAIRALQAAGLEVSLIKDVTPIPHNGCRPPKRRRV</sequence>
<keyword id="KW-1185">Reference proteome</keyword>
<keyword id="KW-0687">Ribonucleoprotein</keyword>
<keyword id="KW-0689">Ribosomal protein</keyword>
<keyword id="KW-0694">RNA-binding</keyword>
<keyword id="KW-0699">rRNA-binding</keyword>
<dbReference type="EMBL" id="CP000924">
    <property type="protein sequence ID" value="ABY94069.1"/>
    <property type="molecule type" value="Genomic_DNA"/>
</dbReference>
<dbReference type="RefSeq" id="WP_003868585.1">
    <property type="nucleotide sequence ID" value="NC_010321.1"/>
</dbReference>
<dbReference type="SMR" id="B0KCM6"/>
<dbReference type="STRING" id="340099.Teth39_0400"/>
<dbReference type="KEGG" id="tpd:Teth39_0400"/>
<dbReference type="eggNOG" id="COG0100">
    <property type="taxonomic scope" value="Bacteria"/>
</dbReference>
<dbReference type="HOGENOM" id="CLU_072439_5_0_9"/>
<dbReference type="Proteomes" id="UP000002156">
    <property type="component" value="Chromosome"/>
</dbReference>
<dbReference type="GO" id="GO:1990904">
    <property type="term" value="C:ribonucleoprotein complex"/>
    <property type="evidence" value="ECO:0007669"/>
    <property type="project" value="UniProtKB-KW"/>
</dbReference>
<dbReference type="GO" id="GO:0005840">
    <property type="term" value="C:ribosome"/>
    <property type="evidence" value="ECO:0007669"/>
    <property type="project" value="UniProtKB-KW"/>
</dbReference>
<dbReference type="GO" id="GO:0019843">
    <property type="term" value="F:rRNA binding"/>
    <property type="evidence" value="ECO:0007669"/>
    <property type="project" value="UniProtKB-UniRule"/>
</dbReference>
<dbReference type="GO" id="GO:0003735">
    <property type="term" value="F:structural constituent of ribosome"/>
    <property type="evidence" value="ECO:0007669"/>
    <property type="project" value="InterPro"/>
</dbReference>
<dbReference type="GO" id="GO:0006412">
    <property type="term" value="P:translation"/>
    <property type="evidence" value="ECO:0007669"/>
    <property type="project" value="UniProtKB-UniRule"/>
</dbReference>
<dbReference type="FunFam" id="3.30.420.80:FF:000001">
    <property type="entry name" value="30S ribosomal protein S11"/>
    <property type="match status" value="1"/>
</dbReference>
<dbReference type="Gene3D" id="3.30.420.80">
    <property type="entry name" value="Ribosomal protein S11"/>
    <property type="match status" value="1"/>
</dbReference>
<dbReference type="HAMAP" id="MF_01310">
    <property type="entry name" value="Ribosomal_uS11"/>
    <property type="match status" value="1"/>
</dbReference>
<dbReference type="InterPro" id="IPR001971">
    <property type="entry name" value="Ribosomal_uS11"/>
</dbReference>
<dbReference type="InterPro" id="IPR019981">
    <property type="entry name" value="Ribosomal_uS11_bac-type"/>
</dbReference>
<dbReference type="InterPro" id="IPR018102">
    <property type="entry name" value="Ribosomal_uS11_CS"/>
</dbReference>
<dbReference type="InterPro" id="IPR036967">
    <property type="entry name" value="Ribosomal_uS11_sf"/>
</dbReference>
<dbReference type="NCBIfam" id="NF003698">
    <property type="entry name" value="PRK05309.1"/>
    <property type="match status" value="1"/>
</dbReference>
<dbReference type="NCBIfam" id="TIGR03632">
    <property type="entry name" value="uS11_bact"/>
    <property type="match status" value="1"/>
</dbReference>
<dbReference type="PANTHER" id="PTHR11759">
    <property type="entry name" value="40S RIBOSOMAL PROTEIN S14/30S RIBOSOMAL PROTEIN S11"/>
    <property type="match status" value="1"/>
</dbReference>
<dbReference type="Pfam" id="PF00411">
    <property type="entry name" value="Ribosomal_S11"/>
    <property type="match status" value="1"/>
</dbReference>
<dbReference type="PIRSF" id="PIRSF002131">
    <property type="entry name" value="Ribosomal_S11"/>
    <property type="match status" value="1"/>
</dbReference>
<dbReference type="SUPFAM" id="SSF53137">
    <property type="entry name" value="Translational machinery components"/>
    <property type="match status" value="1"/>
</dbReference>
<dbReference type="PROSITE" id="PS00054">
    <property type="entry name" value="RIBOSOMAL_S11"/>
    <property type="match status" value="1"/>
</dbReference>
<name>RS11_THEP3</name>
<gene>
    <name evidence="1" type="primary">rpsK</name>
    <name type="ordered locus">Teth39_0400</name>
</gene>
<feature type="chain" id="PRO_1000141151" description="Small ribosomal subunit protein uS11">
    <location>
        <begin position="1"/>
        <end position="130"/>
    </location>
</feature>
<evidence type="ECO:0000255" key="1">
    <source>
        <dbReference type="HAMAP-Rule" id="MF_01310"/>
    </source>
</evidence>
<evidence type="ECO:0000305" key="2"/>
<organism>
    <name type="scientific">Thermoanaerobacter pseudethanolicus (strain ATCC 33223 / 39E)</name>
    <name type="common">Clostridium thermohydrosulfuricum</name>
    <dbReference type="NCBI Taxonomy" id="340099"/>
    <lineage>
        <taxon>Bacteria</taxon>
        <taxon>Bacillati</taxon>
        <taxon>Bacillota</taxon>
        <taxon>Clostridia</taxon>
        <taxon>Thermoanaerobacterales</taxon>
        <taxon>Thermoanaerobacteraceae</taxon>
        <taxon>Thermoanaerobacter</taxon>
    </lineage>
</organism>
<accession>B0KCM6</accession>
<reference key="1">
    <citation type="submission" date="2008-01" db="EMBL/GenBank/DDBJ databases">
        <title>Complete sequence of Thermoanaerobacter pseudethanolicus 39E.</title>
        <authorList>
            <person name="Copeland A."/>
            <person name="Lucas S."/>
            <person name="Lapidus A."/>
            <person name="Barry K."/>
            <person name="Glavina del Rio T."/>
            <person name="Dalin E."/>
            <person name="Tice H."/>
            <person name="Pitluck S."/>
            <person name="Bruce D."/>
            <person name="Goodwin L."/>
            <person name="Saunders E."/>
            <person name="Brettin T."/>
            <person name="Detter J.C."/>
            <person name="Han C."/>
            <person name="Schmutz J."/>
            <person name="Larimer F."/>
            <person name="Land M."/>
            <person name="Hauser L."/>
            <person name="Kyrpides N."/>
            <person name="Lykidis A."/>
            <person name="Hemme C."/>
            <person name="Fields M.W."/>
            <person name="He Z."/>
            <person name="Zhou J."/>
            <person name="Richardson P."/>
        </authorList>
    </citation>
    <scope>NUCLEOTIDE SEQUENCE [LARGE SCALE GENOMIC DNA]</scope>
    <source>
        <strain>ATCC 33223 / DSM 2355 / 39E</strain>
    </source>
</reference>